<feature type="chain" id="PRO_0000223480" description="Eukaryotic translation initiation factor 3 subunit B">
    <location>
        <begin position="1"/>
        <end position="797"/>
    </location>
</feature>
<feature type="domain" description="RRM" evidence="3">
    <location>
        <begin position="168"/>
        <end position="251"/>
    </location>
</feature>
<feature type="repeat" description="WD 1">
    <location>
        <begin position="315"/>
        <end position="353"/>
    </location>
</feature>
<feature type="repeat" description="WD 2">
    <location>
        <begin position="355"/>
        <end position="400"/>
    </location>
</feature>
<feature type="repeat" description="WD 3">
    <location>
        <begin position="404"/>
        <end position="442"/>
    </location>
</feature>
<feature type="repeat" description="WD 4">
    <location>
        <begin position="543"/>
        <end position="584"/>
    </location>
</feature>
<feature type="repeat" description="WD 5">
    <location>
        <begin position="632"/>
        <end position="677"/>
    </location>
</feature>
<feature type="region of interest" description="Disordered" evidence="4">
    <location>
        <begin position="1"/>
        <end position="141"/>
    </location>
</feature>
<feature type="region of interest" description="Sufficient for interaction with EIF3E" evidence="3">
    <location>
        <begin position="107"/>
        <end position="396"/>
    </location>
</feature>
<feature type="region of interest" description="Sufficient for interaction with EIF3J" evidence="3">
    <location>
        <begin position="153"/>
        <end position="257"/>
    </location>
</feature>
<feature type="compositionally biased region" description="Basic and acidic residues" evidence="4">
    <location>
        <begin position="53"/>
        <end position="62"/>
    </location>
</feature>
<feature type="compositionally biased region" description="Low complexity" evidence="4">
    <location>
        <begin position="63"/>
        <end position="91"/>
    </location>
</feature>
<feature type="compositionally biased region" description="Basic and acidic residues" evidence="4">
    <location>
        <begin position="100"/>
        <end position="110"/>
    </location>
</feature>
<feature type="compositionally biased region" description="Acidic residues" evidence="4">
    <location>
        <begin position="129"/>
        <end position="141"/>
    </location>
</feature>
<feature type="modified residue" description="N-acetylmethionine" evidence="1 3">
    <location>
        <position position="1"/>
    </location>
</feature>
<feature type="modified residue" description="Phosphothreonine" evidence="2">
    <location>
        <position position="31"/>
    </location>
</feature>
<feature type="modified residue" description="Phosphoserine" evidence="6">
    <location>
        <position position="37"/>
    </location>
</feature>
<feature type="modified residue" description="Phosphoserine" evidence="6">
    <location>
        <position position="40"/>
    </location>
</feature>
<feature type="modified residue" description="Phosphoserine" evidence="2 3">
    <location>
        <position position="68"/>
    </location>
</feature>
<feature type="modified residue" description="Phosphothreonine" evidence="2">
    <location>
        <position position="72"/>
    </location>
</feature>
<feature type="modified residue" description="Phosphoserine" evidence="6">
    <location>
        <position position="75"/>
    </location>
</feature>
<feature type="modified residue" description="Phosphoserine" evidence="6">
    <location>
        <position position="79"/>
    </location>
</feature>
<feature type="modified residue" description="Phosphoserine" evidence="2">
    <location>
        <position position="84"/>
    </location>
</feature>
<feature type="modified residue" description="Phosphoserine" evidence="2">
    <location>
        <position position="105"/>
    </location>
</feature>
<feature type="modified residue" description="Phosphoserine" evidence="5 6">
    <location>
        <position position="114"/>
    </location>
</feature>
<feature type="modified residue" description="Phosphoserine" evidence="5 6">
    <location>
        <position position="117"/>
    </location>
</feature>
<feature type="modified residue" description="Phosphoserine" evidence="6">
    <location>
        <position position="135"/>
    </location>
</feature>
<feature type="modified residue" description="Phosphoserine" evidence="6">
    <location>
        <position position="137"/>
    </location>
</feature>
<feature type="modified residue" description="Phosphoserine" evidence="6">
    <location>
        <position position="147"/>
    </location>
</feature>
<feature type="modified residue" description="N6-acetyllysine" evidence="1">
    <location>
        <position position="192"/>
    </location>
</feature>
<feature type="modified residue" description="Phosphoserine" evidence="1 3">
    <location>
        <position position="222"/>
    </location>
</feature>
<feature type="modified residue" description="N6-acetyllysine" evidence="1">
    <location>
        <position position="271"/>
    </location>
</feature>
<feature type="modified residue" description="N6-acetyllysine" evidence="1">
    <location>
        <position position="347"/>
    </location>
</feature>
<name>EIF3B_RAT</name>
<comment type="function">
    <text evidence="3">RNA-binding component of the eukaryotic translation initiation factor 3 (eIF-3) complex, which is required for several steps in the initiation of protein synthesis. The eIF-3 complex associates with the 40S ribosome and facilitates the recruitment of eIF-1, eIF-1A, eIF-2:GTP:methionyl-tRNAi and eIF-5 to form the 43S pre-initiation complex (43S PIC). The eIF-3 complex stimulates mRNA recruitment to the 43S PIC and scanning of the mRNA for AUG recognition. The eIF-3 complex is also required for disassembly and recycling of post-termination ribosomal complexes and subsequently prevents premature joining of the 40S and 60S ribosomal subunits prior to initiation. The eIF-3 complex specifically targets and initiates translation of a subset of mRNAs involved in cell proliferation, including cell cycling, differentiation and apoptosis, and uses different modes of RNA stem-loop binding to exert either translational activation or repression.</text>
</comment>
<comment type="subunit">
    <text evidence="1 3">Component of the eukaryotic translation initiation factor 3 (eIF-3) complex, which is composed of 13 subunits: EIF3A, EIF3B, EIF3C, EIF3D, EIF3E, EIF3F, EIF3G, EIF3H, EIF3I, EIF3J, EIF3K, EIF3L and EIF3M. The eIF-3 complex appears to include 3 stable modules: module A is composed of EIF3A, EIF3B, EIF3G and EIF3I; module B is composed of EIF3F, EIF3H, and EIF3M; and module C is composed of EIF3C, EIF3D, EIF3E, EIF3K and EIF3L. EIF3C of module C binds EIF3B of module A and EIF3H of module B, thereby linking the three modules. EIF3J is a labile subunit that binds to the eIF-3 complex via EIF3B. The eIF-3 complex interacts with RPS6KB1 under conditions of nutrient depletion. Mitogenic stimulation leads to binding and activation of a complex composed of MTOR and RPTOR, leading to phosphorylation and release of RPS6KB1 and binding of EIF4B to eIF-3. Also interacts with UPF2 and HNRPD. Interacts with METTL3. Interacts with DDX3X (By similarity).</text>
</comment>
<comment type="subcellular location">
    <subcellularLocation>
        <location evidence="3">Cytoplasm</location>
    </subcellularLocation>
    <subcellularLocation>
        <location evidence="1">Cytoplasm</location>
        <location evidence="1">Stress granule</location>
    </subcellularLocation>
    <text evidence="1">Localizes to stress granules following cellular stress.</text>
</comment>
<comment type="domain">
    <text evidence="3">The RRM domain mediates interaction with EIF3J.</text>
</comment>
<comment type="PTM">
    <text evidence="3">Phosphorylated. Phosphorylation is enhanced upon serum stimulation.</text>
</comment>
<comment type="similarity">
    <text evidence="3">Belongs to the eIF-3 subunit B family.</text>
</comment>
<gene>
    <name type="primary">Eif3b</name>
    <name type="synonym">Eif3s9</name>
</gene>
<protein>
    <recommendedName>
        <fullName evidence="3">Eukaryotic translation initiation factor 3 subunit B</fullName>
        <shortName evidence="3">eIF3b</shortName>
    </recommendedName>
    <alternativeName>
        <fullName evidence="3">Eukaryotic translation initiation factor 3 subunit 9</fullName>
    </alternativeName>
    <alternativeName>
        <fullName evidence="3">eIF-3-eta</fullName>
    </alternativeName>
</protein>
<sequence>MQDAENVAAPEAAEERAEPARQQPVSESPPTDEAAGSGGSEVGRTEDAEEDAEARPEPEVRAKPAAQSEEETAASPAASPTPQSAQEPSAPGKAEAGGEQARHPSARAEEEGGSDGSAAEAEPRALENGEADEPSFSDPEDFVDDVSEEELLGDVLKDRPQEADGIDSVIVVDNVPQVGPDRLEKLKNVIHKIFSKFGKIINDYYPEEDGKTKGYIFLEYASPAHAVDAVKNADGYKLDKQHTFRVNLFTDFDKYMTISDEWDIPEKQPFKDLGNLRYWLEEAECRDQYSVIFESGDRTSIFWNDVKDPVSIEERARWTETYVRWSPKGTYLATFHQRGIALWGGDKFKQIQRFSHQGVQLIDFSPCERYLVTFSPLMDTQDDPQAIIIWDILTGHKKRGFHCESSAHWPIFKWSHDGKFFARMTLDTLSIYETPSMGLLDKKSLKISGIKDFSWSPGGNIIAFWVPEDKDIPARVTLMQLPTRQEIRVRNLFNVVDCKLHWQKNGDYLCVKVDRTPKGTQGVVTNFEIFRMREKQVPVDVVEMKETIIAFAWEPNGSKFAVLHGEAPRISVSFYHVKSNGKIELIKMFDKQQANTIFWSPQGQFVVLAGLRSMNGALAFVDTSDCTVMNIAEHYMASDVEWDPTGRYVVTSVSWWSHKVDNAYWLWTFQGRLLQKNNKDRFCQLLWRPRPPTLLSQDQIKQIKKDLKKYSKIFEQKDRLSQSKASKELVERRRTMMEDFRQYRKMAQELYMKQKNERLELRGGVDTDELDSNVDDWEEETIEFFVTEEVIPLGSQE</sequence>
<proteinExistence type="evidence at protein level"/>
<keyword id="KW-0007">Acetylation</keyword>
<keyword id="KW-0963">Cytoplasm</keyword>
<keyword id="KW-0396">Initiation factor</keyword>
<keyword id="KW-0597">Phosphoprotein</keyword>
<keyword id="KW-0648">Protein biosynthesis</keyword>
<keyword id="KW-1185">Reference proteome</keyword>
<keyword id="KW-0677">Repeat</keyword>
<keyword id="KW-0694">RNA-binding</keyword>
<keyword id="KW-0853">WD repeat</keyword>
<organism>
    <name type="scientific">Rattus norvegicus</name>
    <name type="common">Rat</name>
    <dbReference type="NCBI Taxonomy" id="10116"/>
    <lineage>
        <taxon>Eukaryota</taxon>
        <taxon>Metazoa</taxon>
        <taxon>Chordata</taxon>
        <taxon>Craniata</taxon>
        <taxon>Vertebrata</taxon>
        <taxon>Euteleostomi</taxon>
        <taxon>Mammalia</taxon>
        <taxon>Eutheria</taxon>
        <taxon>Euarchontoglires</taxon>
        <taxon>Glires</taxon>
        <taxon>Rodentia</taxon>
        <taxon>Myomorpha</taxon>
        <taxon>Muroidea</taxon>
        <taxon>Muridae</taxon>
        <taxon>Murinae</taxon>
        <taxon>Rattus</taxon>
    </lineage>
</organism>
<reference key="1">
    <citation type="journal article" date="2004" name="Genome Res.">
        <title>The status, quality, and expansion of the NIH full-length cDNA project: the Mammalian Gene Collection (MGC).</title>
        <authorList>
            <consortium name="The MGC Project Team"/>
        </authorList>
    </citation>
    <scope>NUCLEOTIDE SEQUENCE [LARGE SCALE MRNA]</scope>
    <source>
        <tissue>Thymus</tissue>
    </source>
</reference>
<reference key="2">
    <citation type="journal article" date="2006" name="J. Proteome Res.">
        <title>Phosphoproteomic analysis of rat liver by high capacity IMAC and LC-MS/MS.</title>
        <authorList>
            <person name="Moser K."/>
            <person name="White F.M."/>
        </authorList>
    </citation>
    <scope>PHOSPHORYLATION [LARGE SCALE ANALYSIS] AT SER-114 AND SER-117</scope>
    <scope>IDENTIFICATION BY MASS SPECTROMETRY [LARGE SCALE ANALYSIS]</scope>
</reference>
<reference key="3">
    <citation type="journal article" date="2012" name="Nat. Commun.">
        <title>Quantitative maps of protein phosphorylation sites across 14 different rat organs and tissues.</title>
        <authorList>
            <person name="Lundby A."/>
            <person name="Secher A."/>
            <person name="Lage K."/>
            <person name="Nordsborg N.B."/>
            <person name="Dmytriyev A."/>
            <person name="Lundby C."/>
            <person name="Olsen J.V."/>
        </authorList>
    </citation>
    <scope>PHOSPHORYLATION [LARGE SCALE ANALYSIS] AT SER-37; SER-40; SER-75; SER-79; SER-114; SER-117; SER-135; SER-137 AND SER-147</scope>
    <scope>IDENTIFICATION BY MASS SPECTROMETRY [LARGE SCALE ANALYSIS]</scope>
</reference>
<dbReference type="EMBL" id="BC098728">
    <property type="protein sequence ID" value="AAH98728.1"/>
    <property type="molecule type" value="mRNA"/>
</dbReference>
<dbReference type="RefSeq" id="NP_001026810.1">
    <property type="nucleotide sequence ID" value="NM_001031640.1"/>
</dbReference>
<dbReference type="SMR" id="Q4G061"/>
<dbReference type="BioGRID" id="252584">
    <property type="interactions" value="2"/>
</dbReference>
<dbReference type="CORUM" id="Q4G061"/>
<dbReference type="FunCoup" id="Q4G061">
    <property type="interactions" value="4597"/>
</dbReference>
<dbReference type="IntAct" id="Q4G061">
    <property type="interactions" value="7"/>
</dbReference>
<dbReference type="MINT" id="Q4G061"/>
<dbReference type="STRING" id="10116.ENSRNOP00000057188"/>
<dbReference type="GlyGen" id="Q4G061">
    <property type="glycosylation" value="1 site"/>
</dbReference>
<dbReference type="iPTMnet" id="Q4G061"/>
<dbReference type="PhosphoSitePlus" id="Q4G061"/>
<dbReference type="jPOST" id="Q4G061"/>
<dbReference type="PaxDb" id="10116-ENSRNOP00000057188"/>
<dbReference type="Ensembl" id="ENSRNOT00000060444.2">
    <property type="protein sequence ID" value="ENSRNOP00000057188.1"/>
    <property type="gene ID" value="ENSRNOG00000001253.7"/>
</dbReference>
<dbReference type="GeneID" id="288516"/>
<dbReference type="KEGG" id="rno:288516"/>
<dbReference type="UCSC" id="RGD:1309018">
    <property type="organism name" value="rat"/>
</dbReference>
<dbReference type="AGR" id="RGD:1309018"/>
<dbReference type="CTD" id="8662"/>
<dbReference type="RGD" id="1309018">
    <property type="gene designation" value="Eif3b"/>
</dbReference>
<dbReference type="eggNOG" id="KOG2314">
    <property type="taxonomic scope" value="Eukaryota"/>
</dbReference>
<dbReference type="GeneTree" id="ENSGT00550000074913"/>
<dbReference type="HOGENOM" id="CLU_011152_1_0_1"/>
<dbReference type="InParanoid" id="Q4G061"/>
<dbReference type="OMA" id="LWGGPQF"/>
<dbReference type="OrthoDB" id="10250414at2759"/>
<dbReference type="Reactome" id="R-RNO-156827">
    <property type="pathway name" value="L13a-mediated translational silencing of Ceruloplasmin expression"/>
</dbReference>
<dbReference type="Reactome" id="R-RNO-72649">
    <property type="pathway name" value="Translation initiation complex formation"/>
</dbReference>
<dbReference type="Reactome" id="R-RNO-72689">
    <property type="pathway name" value="Formation of a pool of free 40S subunits"/>
</dbReference>
<dbReference type="Reactome" id="R-RNO-72695">
    <property type="pathway name" value="Formation of the ternary complex, and subsequently, the 43S complex"/>
</dbReference>
<dbReference type="Reactome" id="R-RNO-72702">
    <property type="pathway name" value="Ribosomal scanning and start codon recognition"/>
</dbReference>
<dbReference type="CD-CODE" id="B2E8AD81">
    <property type="entry name" value="Stress granule"/>
</dbReference>
<dbReference type="PRO" id="PR:Q4G061"/>
<dbReference type="Proteomes" id="UP000002494">
    <property type="component" value="Chromosome 12"/>
</dbReference>
<dbReference type="Bgee" id="ENSRNOG00000001253">
    <property type="expression patterns" value="Expressed in pancreas and 19 other cell types or tissues"/>
</dbReference>
<dbReference type="GO" id="GO:0010494">
    <property type="term" value="C:cytoplasmic stress granule"/>
    <property type="evidence" value="ECO:0000250"/>
    <property type="project" value="UniProtKB"/>
</dbReference>
<dbReference type="GO" id="GO:0016282">
    <property type="term" value="C:eukaryotic 43S preinitiation complex"/>
    <property type="evidence" value="ECO:0007669"/>
    <property type="project" value="UniProtKB-UniRule"/>
</dbReference>
<dbReference type="GO" id="GO:0033290">
    <property type="term" value="C:eukaryotic 48S preinitiation complex"/>
    <property type="evidence" value="ECO:0007669"/>
    <property type="project" value="UniProtKB-UniRule"/>
</dbReference>
<dbReference type="GO" id="GO:0005852">
    <property type="term" value="C:eukaryotic translation initiation factor 3 complex"/>
    <property type="evidence" value="ECO:0000250"/>
    <property type="project" value="UniProtKB"/>
</dbReference>
<dbReference type="GO" id="GO:0071541">
    <property type="term" value="C:eukaryotic translation initiation factor 3 complex, eIF3m"/>
    <property type="evidence" value="ECO:0000266"/>
    <property type="project" value="RGD"/>
</dbReference>
<dbReference type="GO" id="GO:0045202">
    <property type="term" value="C:synapse"/>
    <property type="evidence" value="ECO:0000266"/>
    <property type="project" value="RGD"/>
</dbReference>
<dbReference type="GO" id="GO:0003723">
    <property type="term" value="F:RNA binding"/>
    <property type="evidence" value="ECO:0000266"/>
    <property type="project" value="RGD"/>
</dbReference>
<dbReference type="GO" id="GO:0003743">
    <property type="term" value="F:translation initiation factor activity"/>
    <property type="evidence" value="ECO:0000266"/>
    <property type="project" value="RGD"/>
</dbReference>
<dbReference type="GO" id="GO:0031369">
    <property type="term" value="F:translation initiation factor binding"/>
    <property type="evidence" value="ECO:0007669"/>
    <property type="project" value="InterPro"/>
</dbReference>
<dbReference type="GO" id="GO:0001732">
    <property type="term" value="P:formation of cytoplasmic translation initiation complex"/>
    <property type="evidence" value="ECO:0007669"/>
    <property type="project" value="UniProtKB-UniRule"/>
</dbReference>
<dbReference type="GO" id="GO:0075522">
    <property type="term" value="P:IRES-dependent viral translational initiation"/>
    <property type="evidence" value="ECO:0000266"/>
    <property type="project" value="RGD"/>
</dbReference>
<dbReference type="GO" id="GO:0006446">
    <property type="term" value="P:regulation of translational initiation"/>
    <property type="evidence" value="ECO:0000250"/>
    <property type="project" value="UniProtKB"/>
</dbReference>
<dbReference type="GO" id="GO:0006413">
    <property type="term" value="P:translational initiation"/>
    <property type="evidence" value="ECO:0000250"/>
    <property type="project" value="UniProtKB"/>
</dbReference>
<dbReference type="GO" id="GO:0075525">
    <property type="term" value="P:viral translational termination-reinitiation"/>
    <property type="evidence" value="ECO:0000266"/>
    <property type="project" value="RGD"/>
</dbReference>
<dbReference type="CDD" id="cd12278">
    <property type="entry name" value="RRM_eIF3B"/>
    <property type="match status" value="1"/>
</dbReference>
<dbReference type="FunFam" id="2.130.10.10:FF:000489">
    <property type="entry name" value="Eukaryotic translation initiation factor 3 subunit B"/>
    <property type="match status" value="1"/>
</dbReference>
<dbReference type="FunFam" id="2.130.10.10:FF:001855">
    <property type="entry name" value="Eukaryotic translation initiation factor 3 subunit B"/>
    <property type="match status" value="1"/>
</dbReference>
<dbReference type="FunFam" id="3.30.70.330:FF:000164">
    <property type="entry name" value="Eukaryotic translation initiation factor 3 subunit B"/>
    <property type="match status" value="1"/>
</dbReference>
<dbReference type="Gene3D" id="3.30.70.330">
    <property type="match status" value="1"/>
</dbReference>
<dbReference type="Gene3D" id="2.130.10.10">
    <property type="entry name" value="YVTN repeat-like/Quinoprotein amine dehydrogenase"/>
    <property type="match status" value="2"/>
</dbReference>
<dbReference type="HAMAP" id="MF_03001">
    <property type="entry name" value="eIF3b"/>
    <property type="match status" value="1"/>
</dbReference>
<dbReference type="InterPro" id="IPR011400">
    <property type="entry name" value="EIF3B"/>
</dbReference>
<dbReference type="InterPro" id="IPR034363">
    <property type="entry name" value="eIF3B_RRM"/>
</dbReference>
<dbReference type="InterPro" id="IPR012677">
    <property type="entry name" value="Nucleotide-bd_a/b_plait_sf"/>
</dbReference>
<dbReference type="InterPro" id="IPR035979">
    <property type="entry name" value="RBD_domain_sf"/>
</dbReference>
<dbReference type="InterPro" id="IPR000504">
    <property type="entry name" value="RRM_dom"/>
</dbReference>
<dbReference type="InterPro" id="IPR013979">
    <property type="entry name" value="TIF_beta_prop-like"/>
</dbReference>
<dbReference type="InterPro" id="IPR015943">
    <property type="entry name" value="WD40/YVTN_repeat-like_dom_sf"/>
</dbReference>
<dbReference type="PANTHER" id="PTHR14068">
    <property type="entry name" value="EUKARYOTIC TRANSLATION INITIATION FACTOR 3 EIF3 -RELATED"/>
    <property type="match status" value="1"/>
</dbReference>
<dbReference type="PANTHER" id="PTHR14068:SF0">
    <property type="entry name" value="EUKARYOTIC TRANSLATION INITIATION FACTOR 3 SUBUNIT B"/>
    <property type="match status" value="1"/>
</dbReference>
<dbReference type="Pfam" id="PF08662">
    <property type="entry name" value="eIF2A"/>
    <property type="match status" value="1"/>
</dbReference>
<dbReference type="Pfam" id="PF00076">
    <property type="entry name" value="RRM_1"/>
    <property type="match status" value="1"/>
</dbReference>
<dbReference type="PIRSF" id="PIRSF036424">
    <property type="entry name" value="eIF3b"/>
    <property type="match status" value="1"/>
</dbReference>
<dbReference type="SMART" id="SM00360">
    <property type="entry name" value="RRM"/>
    <property type="match status" value="1"/>
</dbReference>
<dbReference type="SUPFAM" id="SSF54928">
    <property type="entry name" value="RNA-binding domain, RBD"/>
    <property type="match status" value="1"/>
</dbReference>
<dbReference type="SUPFAM" id="SSF69322">
    <property type="entry name" value="Tricorn protease domain 2"/>
    <property type="match status" value="1"/>
</dbReference>
<dbReference type="PROSITE" id="PS50102">
    <property type="entry name" value="RRM"/>
    <property type="match status" value="1"/>
</dbReference>
<evidence type="ECO:0000250" key="1">
    <source>
        <dbReference type="UniProtKB" id="P55884"/>
    </source>
</evidence>
<evidence type="ECO:0000250" key="2">
    <source>
        <dbReference type="UniProtKB" id="Q8JZQ9"/>
    </source>
</evidence>
<evidence type="ECO:0000255" key="3">
    <source>
        <dbReference type="HAMAP-Rule" id="MF_03001"/>
    </source>
</evidence>
<evidence type="ECO:0000256" key="4">
    <source>
        <dbReference type="SAM" id="MobiDB-lite"/>
    </source>
</evidence>
<evidence type="ECO:0007744" key="5">
    <source>
    </source>
</evidence>
<evidence type="ECO:0007744" key="6">
    <source>
    </source>
</evidence>
<accession>Q4G061</accession>